<name>RR16_MESVI</name>
<dbReference type="EMBL" id="AF166114">
    <property type="protein sequence ID" value="AAF43836.1"/>
    <property type="molecule type" value="Genomic_DNA"/>
</dbReference>
<dbReference type="RefSeq" id="NP_038395.1">
    <property type="nucleotide sequence ID" value="NC_002186.1"/>
</dbReference>
<dbReference type="SMR" id="Q9MUR5"/>
<dbReference type="GeneID" id="800961"/>
<dbReference type="GO" id="GO:0009507">
    <property type="term" value="C:chloroplast"/>
    <property type="evidence" value="ECO:0007669"/>
    <property type="project" value="UniProtKB-SubCell"/>
</dbReference>
<dbReference type="GO" id="GO:0005739">
    <property type="term" value="C:mitochondrion"/>
    <property type="evidence" value="ECO:0007669"/>
    <property type="project" value="GOC"/>
</dbReference>
<dbReference type="GO" id="GO:0015935">
    <property type="term" value="C:small ribosomal subunit"/>
    <property type="evidence" value="ECO:0007669"/>
    <property type="project" value="TreeGrafter"/>
</dbReference>
<dbReference type="GO" id="GO:0003735">
    <property type="term" value="F:structural constituent of ribosome"/>
    <property type="evidence" value="ECO:0007669"/>
    <property type="project" value="InterPro"/>
</dbReference>
<dbReference type="GO" id="GO:0032543">
    <property type="term" value="P:mitochondrial translation"/>
    <property type="evidence" value="ECO:0007669"/>
    <property type="project" value="TreeGrafter"/>
</dbReference>
<dbReference type="Gene3D" id="3.30.1320.10">
    <property type="match status" value="1"/>
</dbReference>
<dbReference type="HAMAP" id="MF_00385">
    <property type="entry name" value="Ribosomal_bS16"/>
    <property type="match status" value="1"/>
</dbReference>
<dbReference type="InterPro" id="IPR000307">
    <property type="entry name" value="Ribosomal_bS16"/>
</dbReference>
<dbReference type="InterPro" id="IPR020592">
    <property type="entry name" value="Ribosomal_bS16_CS"/>
</dbReference>
<dbReference type="InterPro" id="IPR023803">
    <property type="entry name" value="Ribosomal_bS16_dom_sf"/>
</dbReference>
<dbReference type="NCBIfam" id="TIGR00002">
    <property type="entry name" value="S16"/>
    <property type="match status" value="1"/>
</dbReference>
<dbReference type="PANTHER" id="PTHR12919">
    <property type="entry name" value="30S RIBOSOMAL PROTEIN S16"/>
    <property type="match status" value="1"/>
</dbReference>
<dbReference type="PANTHER" id="PTHR12919:SF20">
    <property type="entry name" value="SMALL RIBOSOMAL SUBUNIT PROTEIN BS16M"/>
    <property type="match status" value="1"/>
</dbReference>
<dbReference type="Pfam" id="PF00886">
    <property type="entry name" value="Ribosomal_S16"/>
    <property type="match status" value="1"/>
</dbReference>
<dbReference type="SUPFAM" id="SSF54565">
    <property type="entry name" value="Ribosomal protein S16"/>
    <property type="match status" value="1"/>
</dbReference>
<dbReference type="PROSITE" id="PS00732">
    <property type="entry name" value="RIBOSOMAL_S16"/>
    <property type="match status" value="1"/>
</dbReference>
<sequence length="84" mass="9643">MVKLRLKRYGRKKRPFYRVIAIDSRCRRDGKALKELGFYDPIAGKTQLDVPNIIFYLKAGAQTSETVGNLLQKAKVFNQLSLLN</sequence>
<protein>
    <recommendedName>
        <fullName evidence="1">Small ribosomal subunit protein bS16c</fullName>
    </recommendedName>
    <alternativeName>
        <fullName evidence="2">30S ribosomal protein S16, chloroplastic</fullName>
    </alternativeName>
</protein>
<reference key="1">
    <citation type="journal article" date="2000" name="Nature">
        <title>Ancestral chloroplast genome in Mesostigma viride reveals an early branch of green plant evolution.</title>
        <authorList>
            <person name="Lemieux C."/>
            <person name="Otis C."/>
            <person name="Turmel M."/>
        </authorList>
    </citation>
    <scope>NUCLEOTIDE SEQUENCE [LARGE SCALE GENOMIC DNA]</scope>
    <source>
        <strain>NIES-296 / KY-14 / CCMP 2046</strain>
    </source>
</reference>
<keyword id="KW-0150">Chloroplast</keyword>
<keyword id="KW-0934">Plastid</keyword>
<keyword id="KW-0687">Ribonucleoprotein</keyword>
<keyword id="KW-0689">Ribosomal protein</keyword>
<gene>
    <name evidence="1" type="primary">rps16</name>
</gene>
<geneLocation type="chloroplast"/>
<proteinExistence type="inferred from homology"/>
<evidence type="ECO:0000255" key="1">
    <source>
        <dbReference type="HAMAP-Rule" id="MF_00385"/>
    </source>
</evidence>
<evidence type="ECO:0000305" key="2"/>
<feature type="chain" id="PRO_0000167307" description="Small ribosomal subunit protein bS16c">
    <location>
        <begin position="1"/>
        <end position="84"/>
    </location>
</feature>
<comment type="subcellular location">
    <subcellularLocation>
        <location>Plastid</location>
        <location>Chloroplast</location>
    </subcellularLocation>
</comment>
<comment type="similarity">
    <text evidence="1">Belongs to the bacterial ribosomal protein bS16 family.</text>
</comment>
<organism>
    <name type="scientific">Mesostigma viride</name>
    <name type="common">Green alga</name>
    <dbReference type="NCBI Taxonomy" id="41882"/>
    <lineage>
        <taxon>Eukaryota</taxon>
        <taxon>Viridiplantae</taxon>
        <taxon>Streptophyta</taxon>
        <taxon>Mesostigmatophyceae</taxon>
        <taxon>Mesostigmatales</taxon>
        <taxon>Mesostigmataceae</taxon>
        <taxon>Mesostigma</taxon>
    </lineage>
</organism>
<accession>Q9MUR5</accession>